<dbReference type="EC" id="6.3.5.-" evidence="1"/>
<dbReference type="EMBL" id="CP000264">
    <property type="protein sequence ID" value="ABD54139.1"/>
    <property type="molecule type" value="Genomic_DNA"/>
</dbReference>
<dbReference type="RefSeq" id="WP_011454346.1">
    <property type="nucleotide sequence ID" value="NC_007802.1"/>
</dbReference>
<dbReference type="SMR" id="Q28T23"/>
<dbReference type="STRING" id="290400.Jann_1222"/>
<dbReference type="KEGG" id="jan:Jann_1222"/>
<dbReference type="eggNOG" id="COG0721">
    <property type="taxonomic scope" value="Bacteria"/>
</dbReference>
<dbReference type="HOGENOM" id="CLU_105899_2_0_5"/>
<dbReference type="OrthoDB" id="9794326at2"/>
<dbReference type="Proteomes" id="UP000008326">
    <property type="component" value="Chromosome"/>
</dbReference>
<dbReference type="GO" id="GO:0050566">
    <property type="term" value="F:asparaginyl-tRNA synthase (glutamine-hydrolyzing) activity"/>
    <property type="evidence" value="ECO:0007669"/>
    <property type="project" value="RHEA"/>
</dbReference>
<dbReference type="GO" id="GO:0005524">
    <property type="term" value="F:ATP binding"/>
    <property type="evidence" value="ECO:0007669"/>
    <property type="project" value="UniProtKB-KW"/>
</dbReference>
<dbReference type="GO" id="GO:0050567">
    <property type="term" value="F:glutaminyl-tRNA synthase (glutamine-hydrolyzing) activity"/>
    <property type="evidence" value="ECO:0007669"/>
    <property type="project" value="UniProtKB-UniRule"/>
</dbReference>
<dbReference type="GO" id="GO:0070681">
    <property type="term" value="P:glutaminyl-tRNAGln biosynthesis via transamidation"/>
    <property type="evidence" value="ECO:0007669"/>
    <property type="project" value="TreeGrafter"/>
</dbReference>
<dbReference type="GO" id="GO:0006450">
    <property type="term" value="P:regulation of translational fidelity"/>
    <property type="evidence" value="ECO:0007669"/>
    <property type="project" value="InterPro"/>
</dbReference>
<dbReference type="GO" id="GO:0006412">
    <property type="term" value="P:translation"/>
    <property type="evidence" value="ECO:0007669"/>
    <property type="project" value="UniProtKB-UniRule"/>
</dbReference>
<dbReference type="Gene3D" id="1.10.20.60">
    <property type="entry name" value="Glu-tRNAGln amidotransferase C subunit, N-terminal domain"/>
    <property type="match status" value="1"/>
</dbReference>
<dbReference type="HAMAP" id="MF_00122">
    <property type="entry name" value="GatC"/>
    <property type="match status" value="1"/>
</dbReference>
<dbReference type="InterPro" id="IPR036113">
    <property type="entry name" value="Asp/Glu-ADT_sf_sub_c"/>
</dbReference>
<dbReference type="InterPro" id="IPR003837">
    <property type="entry name" value="GatC"/>
</dbReference>
<dbReference type="NCBIfam" id="TIGR00135">
    <property type="entry name" value="gatC"/>
    <property type="match status" value="1"/>
</dbReference>
<dbReference type="PANTHER" id="PTHR15004">
    <property type="entry name" value="GLUTAMYL-TRNA(GLN) AMIDOTRANSFERASE SUBUNIT C, MITOCHONDRIAL"/>
    <property type="match status" value="1"/>
</dbReference>
<dbReference type="PANTHER" id="PTHR15004:SF0">
    <property type="entry name" value="GLUTAMYL-TRNA(GLN) AMIDOTRANSFERASE SUBUNIT C, MITOCHONDRIAL"/>
    <property type="match status" value="1"/>
</dbReference>
<dbReference type="Pfam" id="PF02686">
    <property type="entry name" value="GatC"/>
    <property type="match status" value="1"/>
</dbReference>
<dbReference type="SUPFAM" id="SSF141000">
    <property type="entry name" value="Glu-tRNAGln amidotransferase C subunit"/>
    <property type="match status" value="1"/>
</dbReference>
<feature type="chain" id="PRO_1000016132" description="Aspartyl/glutamyl-tRNA(Asn/Gln) amidotransferase subunit C">
    <location>
        <begin position="1"/>
        <end position="95"/>
    </location>
</feature>
<comment type="function">
    <text evidence="1">Allows the formation of correctly charged Asn-tRNA(Asn) or Gln-tRNA(Gln) through the transamidation of misacylated Asp-tRNA(Asn) or Glu-tRNA(Gln) in organisms which lack either or both of asparaginyl-tRNA or glutaminyl-tRNA synthetases. The reaction takes place in the presence of glutamine and ATP through an activated phospho-Asp-tRNA(Asn) or phospho-Glu-tRNA(Gln).</text>
</comment>
<comment type="catalytic activity">
    <reaction evidence="1">
        <text>L-glutamyl-tRNA(Gln) + L-glutamine + ATP + H2O = L-glutaminyl-tRNA(Gln) + L-glutamate + ADP + phosphate + H(+)</text>
        <dbReference type="Rhea" id="RHEA:17521"/>
        <dbReference type="Rhea" id="RHEA-COMP:9681"/>
        <dbReference type="Rhea" id="RHEA-COMP:9684"/>
        <dbReference type="ChEBI" id="CHEBI:15377"/>
        <dbReference type="ChEBI" id="CHEBI:15378"/>
        <dbReference type="ChEBI" id="CHEBI:29985"/>
        <dbReference type="ChEBI" id="CHEBI:30616"/>
        <dbReference type="ChEBI" id="CHEBI:43474"/>
        <dbReference type="ChEBI" id="CHEBI:58359"/>
        <dbReference type="ChEBI" id="CHEBI:78520"/>
        <dbReference type="ChEBI" id="CHEBI:78521"/>
        <dbReference type="ChEBI" id="CHEBI:456216"/>
    </reaction>
</comment>
<comment type="catalytic activity">
    <reaction evidence="1">
        <text>L-aspartyl-tRNA(Asn) + L-glutamine + ATP + H2O = L-asparaginyl-tRNA(Asn) + L-glutamate + ADP + phosphate + 2 H(+)</text>
        <dbReference type="Rhea" id="RHEA:14513"/>
        <dbReference type="Rhea" id="RHEA-COMP:9674"/>
        <dbReference type="Rhea" id="RHEA-COMP:9677"/>
        <dbReference type="ChEBI" id="CHEBI:15377"/>
        <dbReference type="ChEBI" id="CHEBI:15378"/>
        <dbReference type="ChEBI" id="CHEBI:29985"/>
        <dbReference type="ChEBI" id="CHEBI:30616"/>
        <dbReference type="ChEBI" id="CHEBI:43474"/>
        <dbReference type="ChEBI" id="CHEBI:58359"/>
        <dbReference type="ChEBI" id="CHEBI:78515"/>
        <dbReference type="ChEBI" id="CHEBI:78516"/>
        <dbReference type="ChEBI" id="CHEBI:456216"/>
    </reaction>
</comment>
<comment type="subunit">
    <text evidence="1">Heterotrimer of A, B and C subunits.</text>
</comment>
<comment type="similarity">
    <text evidence="1">Belongs to the GatC family.</text>
</comment>
<organism>
    <name type="scientific">Jannaschia sp. (strain CCS1)</name>
    <dbReference type="NCBI Taxonomy" id="290400"/>
    <lineage>
        <taxon>Bacteria</taxon>
        <taxon>Pseudomonadati</taxon>
        <taxon>Pseudomonadota</taxon>
        <taxon>Alphaproteobacteria</taxon>
        <taxon>Rhodobacterales</taxon>
        <taxon>Roseobacteraceae</taxon>
        <taxon>Jannaschia</taxon>
    </lineage>
</organism>
<sequence length="95" mass="10328">MSIDESTAAKVAKLARIKVEDDALPALANEFNAILGFIEQLEEVDVEGVDPMVSVTPMALPRREDVVTDGDQQTRVLTNAPDAREGFFSVPKVVE</sequence>
<protein>
    <recommendedName>
        <fullName evidence="1">Aspartyl/glutamyl-tRNA(Asn/Gln) amidotransferase subunit C</fullName>
        <shortName evidence="1">Asp/Glu-ADT subunit C</shortName>
        <ecNumber evidence="1">6.3.5.-</ecNumber>
    </recommendedName>
</protein>
<name>GATC_JANSC</name>
<accession>Q28T23</accession>
<keyword id="KW-0067">ATP-binding</keyword>
<keyword id="KW-0436">Ligase</keyword>
<keyword id="KW-0547">Nucleotide-binding</keyword>
<keyword id="KW-0648">Protein biosynthesis</keyword>
<keyword id="KW-1185">Reference proteome</keyword>
<reference key="1">
    <citation type="submission" date="2006-02" db="EMBL/GenBank/DDBJ databases">
        <title>Complete sequence of chromosome of Jannaschia sp. CCS1.</title>
        <authorList>
            <consortium name="US DOE Joint Genome Institute"/>
            <person name="Copeland A."/>
            <person name="Lucas S."/>
            <person name="Lapidus A."/>
            <person name="Barry K."/>
            <person name="Detter J.C."/>
            <person name="Glavina del Rio T."/>
            <person name="Hammon N."/>
            <person name="Israni S."/>
            <person name="Pitluck S."/>
            <person name="Brettin T."/>
            <person name="Bruce D."/>
            <person name="Han C."/>
            <person name="Tapia R."/>
            <person name="Gilna P."/>
            <person name="Chertkov O."/>
            <person name="Saunders E."/>
            <person name="Schmutz J."/>
            <person name="Larimer F."/>
            <person name="Land M."/>
            <person name="Kyrpides N."/>
            <person name="Lykidis A."/>
            <person name="Moran M.A."/>
            <person name="Belas R."/>
            <person name="Ye W."/>
            <person name="Buchan A."/>
            <person name="Gonzalez J.M."/>
            <person name="Schell M.A."/>
            <person name="Richardson P."/>
        </authorList>
    </citation>
    <scope>NUCLEOTIDE SEQUENCE [LARGE SCALE GENOMIC DNA]</scope>
    <source>
        <strain>CCS1</strain>
    </source>
</reference>
<gene>
    <name evidence="1" type="primary">gatC</name>
    <name type="ordered locus">Jann_1222</name>
</gene>
<proteinExistence type="inferred from homology"/>
<evidence type="ECO:0000255" key="1">
    <source>
        <dbReference type="HAMAP-Rule" id="MF_00122"/>
    </source>
</evidence>